<reference key="1">
    <citation type="journal article" date="1998" name="Nature">
        <title>The genome sequence of Rickettsia prowazekii and the origin of mitochondria.</title>
        <authorList>
            <person name="Andersson S.G.E."/>
            <person name="Zomorodipour A."/>
            <person name="Andersson J.O."/>
            <person name="Sicheritz-Ponten T."/>
            <person name="Alsmark U.C.M."/>
            <person name="Podowski R.M."/>
            <person name="Naeslund A.K."/>
            <person name="Eriksson A.-S."/>
            <person name="Winkler H.H."/>
            <person name="Kurland C.G."/>
        </authorList>
    </citation>
    <scope>NUCLEOTIDE SEQUENCE [LARGE SCALE GENOMIC DNA]</scope>
    <source>
        <strain>Madrid E</strain>
    </source>
</reference>
<protein>
    <recommendedName>
        <fullName evidence="1">Acetate kinase</fullName>
        <ecNumber evidence="1">2.7.2.1</ecNumber>
    </recommendedName>
    <alternativeName>
        <fullName evidence="1">Acetokinase</fullName>
    </alternativeName>
</protein>
<feature type="chain" id="PRO_0000107605" description="Acetate kinase">
    <location>
        <begin position="1"/>
        <end position="385"/>
    </location>
</feature>
<feature type="active site" description="Proton donor/acceptor" evidence="1">
    <location>
        <position position="144"/>
    </location>
</feature>
<feature type="binding site" evidence="1">
    <location>
        <position position="9"/>
    </location>
    <ligand>
        <name>Mg(2+)</name>
        <dbReference type="ChEBI" id="CHEBI:18420"/>
    </ligand>
</feature>
<feature type="binding site" evidence="1">
    <location>
        <position position="16"/>
    </location>
    <ligand>
        <name>ATP</name>
        <dbReference type="ChEBI" id="CHEBI:30616"/>
    </ligand>
</feature>
<feature type="binding site" evidence="1">
    <location>
        <position position="87"/>
    </location>
    <ligand>
        <name>substrate</name>
    </ligand>
</feature>
<feature type="binding site" evidence="1">
    <location>
        <begin position="202"/>
        <end position="206"/>
    </location>
    <ligand>
        <name>ATP</name>
        <dbReference type="ChEBI" id="CHEBI:30616"/>
    </ligand>
</feature>
<feature type="binding site" evidence="1">
    <location>
        <begin position="277"/>
        <end position="279"/>
    </location>
    <ligand>
        <name>ATP</name>
        <dbReference type="ChEBI" id="CHEBI:30616"/>
    </ligand>
</feature>
<feature type="binding site" evidence="1">
    <location>
        <position position="373"/>
    </location>
    <ligand>
        <name>Mg(2+)</name>
        <dbReference type="ChEBI" id="CHEBI:18420"/>
    </ligand>
</feature>
<feature type="site" description="Transition state stabilizer" evidence="1">
    <location>
        <position position="175"/>
    </location>
</feature>
<feature type="site" description="Transition state stabilizer" evidence="1">
    <location>
        <position position="235"/>
    </location>
</feature>
<keyword id="KW-0067">ATP-binding</keyword>
<keyword id="KW-0963">Cytoplasm</keyword>
<keyword id="KW-0418">Kinase</keyword>
<keyword id="KW-0460">Magnesium</keyword>
<keyword id="KW-0479">Metal-binding</keyword>
<keyword id="KW-0547">Nucleotide-binding</keyword>
<keyword id="KW-1185">Reference proteome</keyword>
<keyword id="KW-0808">Transferase</keyword>
<sequence>MKDVILIANAGSSSLKISIFAIQNKRVNDKIYNIFLEKNNNKILFYINQQKESTTSIKDDPIEMMINLFEEWWKKQSALNLIATGHRIVHGGKNFNKPVVVNKKVIKELRVLIPLSPLHQPYNLQVLDLFFQKYKAISHIICFDTSFHCTNSPITKAFGLPKQYYDKGIMRYGFHGLSYQYVSSHFKEITMEDLPPKAIIAHLGSGSSLCAIKNGLSLTSSMGFSVLDGVMMATRPGNLDPGVVLYLINNEKMTINEITELLYKKSGLLGMSGESSDMRTLIASNSHDSKFAVDLFVYRIVLEIGKLIAALEGIDCLIFTAGVGQNSPVIREMISKKLSWLGIKIDYEKNQKNEHRISTKGSKIKVFVVPTNEELIIAEEVMKFL</sequence>
<organism>
    <name type="scientific">Rickettsia prowazekii (strain Madrid E)</name>
    <dbReference type="NCBI Taxonomy" id="272947"/>
    <lineage>
        <taxon>Bacteria</taxon>
        <taxon>Pseudomonadati</taxon>
        <taxon>Pseudomonadota</taxon>
        <taxon>Alphaproteobacteria</taxon>
        <taxon>Rickettsiales</taxon>
        <taxon>Rickettsiaceae</taxon>
        <taxon>Rickettsieae</taxon>
        <taxon>Rickettsia</taxon>
        <taxon>typhus group</taxon>
    </lineage>
</organism>
<comment type="function">
    <text evidence="1">Catalyzes the formation of acetyl phosphate from acetate and ATP. Can also catalyze the reverse reaction.</text>
</comment>
<comment type="catalytic activity">
    <reaction evidence="1">
        <text>acetate + ATP = acetyl phosphate + ADP</text>
        <dbReference type="Rhea" id="RHEA:11352"/>
        <dbReference type="ChEBI" id="CHEBI:22191"/>
        <dbReference type="ChEBI" id="CHEBI:30089"/>
        <dbReference type="ChEBI" id="CHEBI:30616"/>
        <dbReference type="ChEBI" id="CHEBI:456216"/>
        <dbReference type="EC" id="2.7.2.1"/>
    </reaction>
</comment>
<comment type="cofactor">
    <cofactor evidence="1">
        <name>Mg(2+)</name>
        <dbReference type="ChEBI" id="CHEBI:18420"/>
    </cofactor>
    <cofactor evidence="1">
        <name>Mn(2+)</name>
        <dbReference type="ChEBI" id="CHEBI:29035"/>
    </cofactor>
    <text evidence="1">Mg(2+). Can also accept Mn(2+).</text>
</comment>
<comment type="pathway">
    <text evidence="1">Metabolic intermediate biosynthesis; acetyl-CoA biosynthesis; acetyl-CoA from acetate: step 1/2.</text>
</comment>
<comment type="subunit">
    <text evidence="1">Homodimer.</text>
</comment>
<comment type="subcellular location">
    <subcellularLocation>
        <location evidence="1">Cytoplasm</location>
    </subcellularLocation>
</comment>
<comment type="similarity">
    <text evidence="1">Belongs to the acetokinase family.</text>
</comment>
<accession>Q9ZE38</accession>
<name>ACKA_RICPR</name>
<evidence type="ECO:0000255" key="1">
    <source>
        <dbReference type="HAMAP-Rule" id="MF_00020"/>
    </source>
</evidence>
<gene>
    <name evidence="1" type="primary">ackA</name>
    <name type="ordered locus">RP110</name>
</gene>
<proteinExistence type="inferred from homology"/>
<dbReference type="EC" id="2.7.2.1" evidence="1"/>
<dbReference type="EMBL" id="AJ235270">
    <property type="protein sequence ID" value="CAA14579.1"/>
    <property type="molecule type" value="Genomic_DNA"/>
</dbReference>
<dbReference type="PIR" id="D71720">
    <property type="entry name" value="D71720"/>
</dbReference>
<dbReference type="RefSeq" id="NP_220502.1">
    <property type="nucleotide sequence ID" value="NC_000963.1"/>
</dbReference>
<dbReference type="RefSeq" id="WP_004597143.1">
    <property type="nucleotide sequence ID" value="NC_000963.1"/>
</dbReference>
<dbReference type="SMR" id="Q9ZE38"/>
<dbReference type="STRING" id="272947.gene:17555193"/>
<dbReference type="EnsemblBacteria" id="CAA14579">
    <property type="protein sequence ID" value="CAA14579"/>
    <property type="gene ID" value="CAA14579"/>
</dbReference>
<dbReference type="KEGG" id="rpr:RP110"/>
<dbReference type="PATRIC" id="fig|272947.5.peg.112"/>
<dbReference type="eggNOG" id="COG0282">
    <property type="taxonomic scope" value="Bacteria"/>
</dbReference>
<dbReference type="HOGENOM" id="CLU_020352_0_0_5"/>
<dbReference type="OrthoDB" id="9802453at2"/>
<dbReference type="UniPathway" id="UPA00340">
    <property type="reaction ID" value="UER00458"/>
</dbReference>
<dbReference type="Proteomes" id="UP000002480">
    <property type="component" value="Chromosome"/>
</dbReference>
<dbReference type="GO" id="GO:0005737">
    <property type="term" value="C:cytoplasm"/>
    <property type="evidence" value="ECO:0007669"/>
    <property type="project" value="UniProtKB-SubCell"/>
</dbReference>
<dbReference type="GO" id="GO:0008776">
    <property type="term" value="F:acetate kinase activity"/>
    <property type="evidence" value="ECO:0007669"/>
    <property type="project" value="UniProtKB-UniRule"/>
</dbReference>
<dbReference type="GO" id="GO:0005524">
    <property type="term" value="F:ATP binding"/>
    <property type="evidence" value="ECO:0007669"/>
    <property type="project" value="UniProtKB-KW"/>
</dbReference>
<dbReference type="GO" id="GO:0000287">
    <property type="term" value="F:magnesium ion binding"/>
    <property type="evidence" value="ECO:0007669"/>
    <property type="project" value="UniProtKB-UniRule"/>
</dbReference>
<dbReference type="GO" id="GO:0006083">
    <property type="term" value="P:acetate metabolic process"/>
    <property type="evidence" value="ECO:0007669"/>
    <property type="project" value="TreeGrafter"/>
</dbReference>
<dbReference type="GO" id="GO:0006085">
    <property type="term" value="P:acetyl-CoA biosynthetic process"/>
    <property type="evidence" value="ECO:0007669"/>
    <property type="project" value="UniProtKB-UniRule"/>
</dbReference>
<dbReference type="Gene3D" id="3.30.420.40">
    <property type="match status" value="2"/>
</dbReference>
<dbReference type="HAMAP" id="MF_00020">
    <property type="entry name" value="Acetate_kinase"/>
    <property type="match status" value="1"/>
</dbReference>
<dbReference type="InterPro" id="IPR004372">
    <property type="entry name" value="Ac/propionate_kinase"/>
</dbReference>
<dbReference type="InterPro" id="IPR000890">
    <property type="entry name" value="Aliphatic_acid_kin_short-chain"/>
</dbReference>
<dbReference type="InterPro" id="IPR023865">
    <property type="entry name" value="Aliphatic_acid_kinase_CS"/>
</dbReference>
<dbReference type="InterPro" id="IPR043129">
    <property type="entry name" value="ATPase_NBD"/>
</dbReference>
<dbReference type="NCBIfam" id="TIGR00016">
    <property type="entry name" value="ackA"/>
    <property type="match status" value="1"/>
</dbReference>
<dbReference type="PANTHER" id="PTHR21060">
    <property type="entry name" value="ACETATE KINASE"/>
    <property type="match status" value="1"/>
</dbReference>
<dbReference type="PANTHER" id="PTHR21060:SF15">
    <property type="entry name" value="ACETATE KINASE-RELATED"/>
    <property type="match status" value="1"/>
</dbReference>
<dbReference type="Pfam" id="PF00871">
    <property type="entry name" value="Acetate_kinase"/>
    <property type="match status" value="1"/>
</dbReference>
<dbReference type="PIRSF" id="PIRSF000722">
    <property type="entry name" value="Acetate_prop_kin"/>
    <property type="match status" value="1"/>
</dbReference>
<dbReference type="PRINTS" id="PR00471">
    <property type="entry name" value="ACETATEKNASE"/>
</dbReference>
<dbReference type="SUPFAM" id="SSF53067">
    <property type="entry name" value="Actin-like ATPase domain"/>
    <property type="match status" value="2"/>
</dbReference>
<dbReference type="PROSITE" id="PS01075">
    <property type="entry name" value="ACETATE_KINASE_1"/>
    <property type="match status" value="1"/>
</dbReference>
<dbReference type="PROSITE" id="PS01076">
    <property type="entry name" value="ACETATE_KINASE_2"/>
    <property type="match status" value="1"/>
</dbReference>